<feature type="initiator methionine" description="Removed">
    <location>
        <position position="1"/>
    </location>
</feature>
<feature type="chain" id="PRO_0000122797" description="Protein RecA">
    <location>
        <begin position="2"/>
        <end position="355"/>
    </location>
</feature>
<feature type="binding site" evidence="1">
    <location>
        <begin position="67"/>
        <end position="74"/>
    </location>
    <ligand>
        <name>ATP</name>
        <dbReference type="ChEBI" id="CHEBI:30616"/>
    </ligand>
</feature>
<sequence>MAIDENKQKALAAALGQIEKQFGKGSIMRLGEDRSMNVETISTGSLSLDVALGAGGLPRGRIVEIYGPESSGKTTLTLQVIASAQREGKICAFIDAEHALDPIYAQKLGVDIDNLLCSQPDTGEQALEICDALSRSGAVDVIVVDSVAALTPKAEIEGEIGDSHVGLAARMMSQAMRKLAGNLKNSNTLLIFINQIRMKIGVMFGNPETTTGGNALKFYASVRLDIRRIGSVKNGDEVIGSETRVKVVKNKVAAPFKQAEFQIMYGEGINTYGELIDLGVKHKLVEKAGAWYSYNGEKIGQGKANATNYLKEHPEMYNELNTKLREMLLNHAGEFTSAADFAGEESDSDADDTKE</sequence>
<gene>
    <name evidence="1" type="primary">recA</name>
</gene>
<organism>
    <name type="scientific">Proteus mirabilis</name>
    <dbReference type="NCBI Taxonomy" id="584"/>
    <lineage>
        <taxon>Bacteria</taxon>
        <taxon>Pseudomonadati</taxon>
        <taxon>Pseudomonadota</taxon>
        <taxon>Gammaproteobacteria</taxon>
        <taxon>Enterobacterales</taxon>
        <taxon>Morganellaceae</taxon>
        <taxon>Proteus</taxon>
    </lineage>
</organism>
<name>RECA_PROMI</name>
<proteinExistence type="inferred from homology"/>
<keyword id="KW-0067">ATP-binding</keyword>
<keyword id="KW-0963">Cytoplasm</keyword>
<keyword id="KW-0227">DNA damage</keyword>
<keyword id="KW-0233">DNA recombination</keyword>
<keyword id="KW-0234">DNA repair</keyword>
<keyword id="KW-0238">DNA-binding</keyword>
<keyword id="KW-0547">Nucleotide-binding</keyword>
<keyword id="KW-0742">SOS response</keyword>
<reference key="1">
    <citation type="journal article" date="1989" name="Nucleic Acids Res.">
        <title>Nucleotide sequence of the recA gene of Proteus mirabilis.</title>
        <authorList>
            <person name="Akaboshi E."/>
            <person name="Yip M.L.R."/>
            <person name="Howard-Flanders P."/>
        </authorList>
    </citation>
    <scope>NUCLEOTIDE SEQUENCE [GENOMIC DNA]</scope>
    <source>
        <strain>PG1300</strain>
    </source>
</reference>
<accession>P11406</accession>
<comment type="function">
    <text evidence="1">Can catalyze the hydrolysis of ATP in the presence of single-stranded DNA, the ATP-dependent uptake of single-stranded DNA by duplex DNA, and the ATP-dependent hybridization of homologous single-stranded DNAs. It interacts with LexA causing its activation and leading to its autocatalytic cleavage.</text>
</comment>
<comment type="subcellular location">
    <subcellularLocation>
        <location evidence="1">Cytoplasm</location>
    </subcellularLocation>
</comment>
<comment type="similarity">
    <text evidence="1">Belongs to the RecA family.</text>
</comment>
<protein>
    <recommendedName>
        <fullName evidence="1">Protein RecA</fullName>
    </recommendedName>
    <alternativeName>
        <fullName evidence="1">Recombinase A</fullName>
    </alternativeName>
</protein>
<dbReference type="EMBL" id="X14870">
    <property type="protein sequence ID" value="CAA33015.1"/>
    <property type="molecule type" value="Genomic_DNA"/>
</dbReference>
<dbReference type="PIR" id="S04606">
    <property type="entry name" value="RQEBPM"/>
</dbReference>
<dbReference type="RefSeq" id="WP_004247401.1">
    <property type="nucleotide sequence ID" value="NZ_WURR01000003.1"/>
</dbReference>
<dbReference type="SMR" id="P11406"/>
<dbReference type="STRING" id="584.AOUC001_13985"/>
<dbReference type="GeneID" id="6803560"/>
<dbReference type="PATRIC" id="fig|584.106.peg.943"/>
<dbReference type="OMA" id="DSKMGLH"/>
<dbReference type="OrthoDB" id="9776733at2"/>
<dbReference type="GO" id="GO:0005829">
    <property type="term" value="C:cytosol"/>
    <property type="evidence" value="ECO:0007669"/>
    <property type="project" value="TreeGrafter"/>
</dbReference>
<dbReference type="GO" id="GO:0005524">
    <property type="term" value="F:ATP binding"/>
    <property type="evidence" value="ECO:0007669"/>
    <property type="project" value="UniProtKB-UniRule"/>
</dbReference>
<dbReference type="GO" id="GO:0016887">
    <property type="term" value="F:ATP hydrolysis activity"/>
    <property type="evidence" value="ECO:0007669"/>
    <property type="project" value="InterPro"/>
</dbReference>
<dbReference type="GO" id="GO:0140664">
    <property type="term" value="F:ATP-dependent DNA damage sensor activity"/>
    <property type="evidence" value="ECO:0007669"/>
    <property type="project" value="InterPro"/>
</dbReference>
<dbReference type="GO" id="GO:0003684">
    <property type="term" value="F:damaged DNA binding"/>
    <property type="evidence" value="ECO:0007669"/>
    <property type="project" value="UniProtKB-UniRule"/>
</dbReference>
<dbReference type="GO" id="GO:0003697">
    <property type="term" value="F:single-stranded DNA binding"/>
    <property type="evidence" value="ECO:0007669"/>
    <property type="project" value="UniProtKB-UniRule"/>
</dbReference>
<dbReference type="GO" id="GO:0006310">
    <property type="term" value="P:DNA recombination"/>
    <property type="evidence" value="ECO:0007669"/>
    <property type="project" value="UniProtKB-UniRule"/>
</dbReference>
<dbReference type="GO" id="GO:0006281">
    <property type="term" value="P:DNA repair"/>
    <property type="evidence" value="ECO:0007669"/>
    <property type="project" value="UniProtKB-UniRule"/>
</dbReference>
<dbReference type="GO" id="GO:0009432">
    <property type="term" value="P:SOS response"/>
    <property type="evidence" value="ECO:0007669"/>
    <property type="project" value="UniProtKB-UniRule"/>
</dbReference>
<dbReference type="CDD" id="cd00983">
    <property type="entry name" value="RecA"/>
    <property type="match status" value="1"/>
</dbReference>
<dbReference type="FunFam" id="3.40.50.300:FF:000087">
    <property type="entry name" value="Recombinase RecA"/>
    <property type="match status" value="1"/>
</dbReference>
<dbReference type="Gene3D" id="3.40.50.300">
    <property type="entry name" value="P-loop containing nucleotide triphosphate hydrolases"/>
    <property type="match status" value="1"/>
</dbReference>
<dbReference type="HAMAP" id="MF_00268">
    <property type="entry name" value="RecA"/>
    <property type="match status" value="1"/>
</dbReference>
<dbReference type="InterPro" id="IPR003593">
    <property type="entry name" value="AAA+_ATPase"/>
</dbReference>
<dbReference type="InterPro" id="IPR013765">
    <property type="entry name" value="DNA_recomb/repair_RecA"/>
</dbReference>
<dbReference type="InterPro" id="IPR020584">
    <property type="entry name" value="DNA_recomb/repair_RecA_CS"/>
</dbReference>
<dbReference type="InterPro" id="IPR027417">
    <property type="entry name" value="P-loop_NTPase"/>
</dbReference>
<dbReference type="InterPro" id="IPR049261">
    <property type="entry name" value="RecA-like_C"/>
</dbReference>
<dbReference type="InterPro" id="IPR049428">
    <property type="entry name" value="RecA-like_N"/>
</dbReference>
<dbReference type="InterPro" id="IPR020588">
    <property type="entry name" value="RecA_ATP-bd"/>
</dbReference>
<dbReference type="InterPro" id="IPR023400">
    <property type="entry name" value="RecA_C_sf"/>
</dbReference>
<dbReference type="InterPro" id="IPR020587">
    <property type="entry name" value="RecA_monomer-monomer_interface"/>
</dbReference>
<dbReference type="NCBIfam" id="TIGR02012">
    <property type="entry name" value="tigrfam_recA"/>
    <property type="match status" value="1"/>
</dbReference>
<dbReference type="PANTHER" id="PTHR45900:SF1">
    <property type="entry name" value="MITOCHONDRIAL DNA REPAIR PROTEIN RECA HOMOLOG-RELATED"/>
    <property type="match status" value="1"/>
</dbReference>
<dbReference type="PANTHER" id="PTHR45900">
    <property type="entry name" value="RECA"/>
    <property type="match status" value="1"/>
</dbReference>
<dbReference type="Pfam" id="PF00154">
    <property type="entry name" value="RecA"/>
    <property type="match status" value="1"/>
</dbReference>
<dbReference type="Pfam" id="PF21096">
    <property type="entry name" value="RecA_C"/>
    <property type="match status" value="1"/>
</dbReference>
<dbReference type="PRINTS" id="PR00142">
    <property type="entry name" value="RECA"/>
</dbReference>
<dbReference type="SMART" id="SM00382">
    <property type="entry name" value="AAA"/>
    <property type="match status" value="1"/>
</dbReference>
<dbReference type="SUPFAM" id="SSF52540">
    <property type="entry name" value="P-loop containing nucleoside triphosphate hydrolases"/>
    <property type="match status" value="1"/>
</dbReference>
<dbReference type="SUPFAM" id="SSF54752">
    <property type="entry name" value="RecA protein, C-terminal domain"/>
    <property type="match status" value="1"/>
</dbReference>
<dbReference type="PROSITE" id="PS00321">
    <property type="entry name" value="RECA_1"/>
    <property type="match status" value="1"/>
</dbReference>
<dbReference type="PROSITE" id="PS50162">
    <property type="entry name" value="RECA_2"/>
    <property type="match status" value="1"/>
</dbReference>
<dbReference type="PROSITE" id="PS50163">
    <property type="entry name" value="RECA_3"/>
    <property type="match status" value="1"/>
</dbReference>
<evidence type="ECO:0000255" key="1">
    <source>
        <dbReference type="HAMAP-Rule" id="MF_00268"/>
    </source>
</evidence>